<proteinExistence type="inferred from homology"/>
<feature type="chain" id="PRO_1000044857" description="Chaperone protein HscA">
    <location>
        <begin position="1"/>
        <end position="616"/>
    </location>
</feature>
<gene>
    <name evidence="1" type="primary">hscA</name>
    <name type="ordered locus">ESA_00726</name>
</gene>
<reference key="1">
    <citation type="journal article" date="2010" name="PLoS ONE">
        <title>Genome sequence of Cronobacter sakazakii BAA-894 and comparative genomic hybridization analysis with other Cronobacter species.</title>
        <authorList>
            <person name="Kucerova E."/>
            <person name="Clifton S.W."/>
            <person name="Xia X.Q."/>
            <person name="Long F."/>
            <person name="Porwollik S."/>
            <person name="Fulton L."/>
            <person name="Fronick C."/>
            <person name="Minx P."/>
            <person name="Kyung K."/>
            <person name="Warren W."/>
            <person name="Fulton R."/>
            <person name="Feng D."/>
            <person name="Wollam A."/>
            <person name="Shah N."/>
            <person name="Bhonagiri V."/>
            <person name="Nash W.E."/>
            <person name="Hallsworth-Pepin K."/>
            <person name="Wilson R.K."/>
            <person name="McClelland M."/>
            <person name="Forsythe S.J."/>
        </authorList>
    </citation>
    <scope>NUCLEOTIDE SEQUENCE [LARGE SCALE GENOMIC DNA]</scope>
    <source>
        <strain>ATCC BAA-894</strain>
    </source>
</reference>
<name>HSCA_CROS8</name>
<accession>A7MGW6</accession>
<dbReference type="EMBL" id="CP000783">
    <property type="protein sequence ID" value="ABU76003.1"/>
    <property type="molecule type" value="Genomic_DNA"/>
</dbReference>
<dbReference type="RefSeq" id="WP_012124038.1">
    <property type="nucleotide sequence ID" value="NC_009778.1"/>
</dbReference>
<dbReference type="SMR" id="A7MGW6"/>
<dbReference type="KEGG" id="esa:ESA_00726"/>
<dbReference type="PATRIC" id="fig|290339.8.peg.642"/>
<dbReference type="HOGENOM" id="CLU_005965_2_1_6"/>
<dbReference type="Proteomes" id="UP000000260">
    <property type="component" value="Chromosome"/>
</dbReference>
<dbReference type="GO" id="GO:0005524">
    <property type="term" value="F:ATP binding"/>
    <property type="evidence" value="ECO:0007669"/>
    <property type="project" value="UniProtKB-KW"/>
</dbReference>
<dbReference type="GO" id="GO:0016887">
    <property type="term" value="F:ATP hydrolysis activity"/>
    <property type="evidence" value="ECO:0007669"/>
    <property type="project" value="UniProtKB-UniRule"/>
</dbReference>
<dbReference type="GO" id="GO:0140662">
    <property type="term" value="F:ATP-dependent protein folding chaperone"/>
    <property type="evidence" value="ECO:0007669"/>
    <property type="project" value="InterPro"/>
</dbReference>
<dbReference type="GO" id="GO:0051082">
    <property type="term" value="F:unfolded protein binding"/>
    <property type="evidence" value="ECO:0007669"/>
    <property type="project" value="InterPro"/>
</dbReference>
<dbReference type="GO" id="GO:0016226">
    <property type="term" value="P:iron-sulfur cluster assembly"/>
    <property type="evidence" value="ECO:0007669"/>
    <property type="project" value="InterPro"/>
</dbReference>
<dbReference type="CDD" id="cd10236">
    <property type="entry name" value="ASKHA_NBD_HSP70_HscA"/>
    <property type="match status" value="1"/>
</dbReference>
<dbReference type="FunFam" id="1.20.1270.10:FF:000006">
    <property type="entry name" value="Chaperone protein HscA"/>
    <property type="match status" value="1"/>
</dbReference>
<dbReference type="FunFam" id="3.30.420.40:FF:000046">
    <property type="entry name" value="Chaperone protein HscA"/>
    <property type="match status" value="1"/>
</dbReference>
<dbReference type="FunFam" id="3.90.640.10:FF:000013">
    <property type="entry name" value="Chaperone protein HscA"/>
    <property type="match status" value="1"/>
</dbReference>
<dbReference type="FunFam" id="2.60.34.10:FF:000005">
    <property type="entry name" value="Chaperone protein HscA homolog"/>
    <property type="match status" value="1"/>
</dbReference>
<dbReference type="Gene3D" id="1.20.1270.10">
    <property type="match status" value="1"/>
</dbReference>
<dbReference type="Gene3D" id="3.30.420.40">
    <property type="match status" value="2"/>
</dbReference>
<dbReference type="Gene3D" id="3.90.640.10">
    <property type="entry name" value="Actin, Chain A, domain 4"/>
    <property type="match status" value="1"/>
</dbReference>
<dbReference type="Gene3D" id="2.60.34.10">
    <property type="entry name" value="Substrate Binding Domain Of DNAk, Chain A, domain 1"/>
    <property type="match status" value="1"/>
</dbReference>
<dbReference type="HAMAP" id="MF_00679">
    <property type="entry name" value="HscA"/>
    <property type="match status" value="1"/>
</dbReference>
<dbReference type="InterPro" id="IPR043129">
    <property type="entry name" value="ATPase_NBD"/>
</dbReference>
<dbReference type="InterPro" id="IPR018181">
    <property type="entry name" value="Heat_shock_70_CS"/>
</dbReference>
<dbReference type="InterPro" id="IPR042039">
    <property type="entry name" value="HscA_NBD"/>
</dbReference>
<dbReference type="InterPro" id="IPR029048">
    <property type="entry name" value="HSP70_C_sf"/>
</dbReference>
<dbReference type="InterPro" id="IPR029047">
    <property type="entry name" value="HSP70_peptide-bd_sf"/>
</dbReference>
<dbReference type="InterPro" id="IPR013126">
    <property type="entry name" value="Hsp_70_fam"/>
</dbReference>
<dbReference type="InterPro" id="IPR010236">
    <property type="entry name" value="ISC_FeS_clus_asmbl_HscA"/>
</dbReference>
<dbReference type="NCBIfam" id="TIGR01991">
    <property type="entry name" value="HscA"/>
    <property type="match status" value="1"/>
</dbReference>
<dbReference type="NCBIfam" id="NF003520">
    <property type="entry name" value="PRK05183.1"/>
    <property type="match status" value="1"/>
</dbReference>
<dbReference type="PANTHER" id="PTHR19375">
    <property type="entry name" value="HEAT SHOCK PROTEIN 70KDA"/>
    <property type="match status" value="1"/>
</dbReference>
<dbReference type="Pfam" id="PF00012">
    <property type="entry name" value="HSP70"/>
    <property type="match status" value="1"/>
</dbReference>
<dbReference type="PRINTS" id="PR00301">
    <property type="entry name" value="HEATSHOCK70"/>
</dbReference>
<dbReference type="SUPFAM" id="SSF53067">
    <property type="entry name" value="Actin-like ATPase domain"/>
    <property type="match status" value="2"/>
</dbReference>
<dbReference type="SUPFAM" id="SSF100934">
    <property type="entry name" value="Heat shock protein 70kD (HSP70), C-terminal subdomain"/>
    <property type="match status" value="1"/>
</dbReference>
<dbReference type="SUPFAM" id="SSF100920">
    <property type="entry name" value="Heat shock protein 70kD (HSP70), peptide-binding domain"/>
    <property type="match status" value="1"/>
</dbReference>
<dbReference type="PROSITE" id="PS00297">
    <property type="entry name" value="HSP70_1"/>
    <property type="match status" value="1"/>
</dbReference>
<dbReference type="PROSITE" id="PS00329">
    <property type="entry name" value="HSP70_2"/>
    <property type="match status" value="1"/>
</dbReference>
<dbReference type="PROSITE" id="PS01036">
    <property type="entry name" value="HSP70_3"/>
    <property type="match status" value="1"/>
</dbReference>
<comment type="function">
    <text evidence="1">Chaperone involved in the maturation of iron-sulfur cluster-containing proteins. Has a low intrinsic ATPase activity which is markedly stimulated by HscB. Involved in the maturation of IscU.</text>
</comment>
<comment type="similarity">
    <text evidence="1">Belongs to the heat shock protein 70 family.</text>
</comment>
<evidence type="ECO:0000255" key="1">
    <source>
        <dbReference type="HAMAP-Rule" id="MF_00679"/>
    </source>
</evidence>
<protein>
    <recommendedName>
        <fullName evidence="1">Chaperone protein HscA</fullName>
    </recommendedName>
    <alternativeName>
        <fullName evidence="1">Hsc66</fullName>
    </alternativeName>
</protein>
<sequence length="616" mass="65773">MALLQISEPGMSSAPHQRRLAAGIDLGTTHSLVATVRSGQPETLADHQGRHLLPSVVHYQAQGYNVGYDARAQAADDPVNTISSVKRLMGRSLADIQARYPHLPYQLRASENGLPMIDTPAGLLNPVRVSADILKALAERAREALAGDLDGVVITVPAYFDDAQRQGTKDAARLAGLHVLRLLNEPTAAAIAYGLDSGQEGVIAVYDLGGGTFDISVLRLSRGVFEVLATGGDSALGGDDFDHLLADYIREQAGIADRSDNRIQRQLLDAATQAKIELSDADVAQVNVAGWQGSITREQFNELIAPLVKRTLLSCRRALKDAGVEASDVLEVVMVGGSTRVPLVRERVGEFFGRTPLTSIDPDRVVAIGAAIQADILVGNKPDSEMLLLDVIPLSLGLETMGGLVEKVIPRNTTIPVARAQEFTTFKDGQTAMAIHVMQGERELVQDCRSLARFTLRGIPAMPAGGAHIRVTFQVDADGLLSVTAMEKSTGVEASIQVKPSYGLTDGEIASMIQDSMSFAEQDVQARMLAEQKVEAARVLESLDGALKSDGALLSAAERAAIDDAMAQLRAAAEGNDASAIEDAIKNTDKQTQEFAARRMDESIRQALKGHSVDEV</sequence>
<keyword id="KW-0067">ATP-binding</keyword>
<keyword id="KW-0143">Chaperone</keyword>
<keyword id="KW-0547">Nucleotide-binding</keyword>
<keyword id="KW-1185">Reference proteome</keyword>
<organism>
    <name type="scientific">Cronobacter sakazakii (strain ATCC BAA-894)</name>
    <name type="common">Enterobacter sakazakii</name>
    <dbReference type="NCBI Taxonomy" id="290339"/>
    <lineage>
        <taxon>Bacteria</taxon>
        <taxon>Pseudomonadati</taxon>
        <taxon>Pseudomonadota</taxon>
        <taxon>Gammaproteobacteria</taxon>
        <taxon>Enterobacterales</taxon>
        <taxon>Enterobacteriaceae</taxon>
        <taxon>Cronobacter</taxon>
    </lineage>
</organism>